<accession>Q4KF31</accession>
<organism>
    <name type="scientific">Pseudomonas fluorescens (strain ATCC BAA-477 / NRRL B-23932 / Pf-5)</name>
    <dbReference type="NCBI Taxonomy" id="220664"/>
    <lineage>
        <taxon>Bacteria</taxon>
        <taxon>Pseudomonadati</taxon>
        <taxon>Pseudomonadota</taxon>
        <taxon>Gammaproteobacteria</taxon>
        <taxon>Pseudomonadales</taxon>
        <taxon>Pseudomonadaceae</taxon>
        <taxon>Pseudomonas</taxon>
    </lineage>
</organism>
<gene>
    <name evidence="1" type="primary">azoR3</name>
    <name type="ordered locus">PFL_2033</name>
</gene>
<feature type="chain" id="PRO_0000245946" description="FMN-dependent NADH:quinone oxidoreductase 3">
    <location>
        <begin position="1"/>
        <end position="216"/>
    </location>
</feature>
<feature type="binding site" evidence="1">
    <location>
        <position position="10"/>
    </location>
    <ligand>
        <name>FMN</name>
        <dbReference type="ChEBI" id="CHEBI:58210"/>
    </ligand>
</feature>
<feature type="binding site" evidence="1">
    <location>
        <begin position="16"/>
        <end position="18"/>
    </location>
    <ligand>
        <name>FMN</name>
        <dbReference type="ChEBI" id="CHEBI:58210"/>
    </ligand>
</feature>
<sequence length="216" mass="24250">MTRLLHIQCSPRLRRSASLEIAHSFIQSYRQQRPDTEVTTLDLWSLDLPELDQTAMDAKYAQLAGQPLGNAEQRAWARLQALAEPLHQADLLVLSIPLWNFSIPYKLKHFIDLVSHQGILFSFDPENSLQGLLRNKTAVAAYARGLDFSSRSSTPAPAFDFQKPYIEAWLNFIGIANQHSLIVEKTILGPDIDQASRQAAAEQAQALAQQLAARQY</sequence>
<evidence type="ECO:0000255" key="1">
    <source>
        <dbReference type="HAMAP-Rule" id="MF_01216"/>
    </source>
</evidence>
<proteinExistence type="inferred from homology"/>
<protein>
    <recommendedName>
        <fullName evidence="1">FMN-dependent NADH:quinone oxidoreductase 3</fullName>
        <ecNumber evidence="1">1.6.5.-</ecNumber>
    </recommendedName>
    <alternativeName>
        <fullName evidence="1">Azo-dye reductase 3</fullName>
    </alternativeName>
    <alternativeName>
        <fullName evidence="1">FMN-dependent NADH-azo compound oxidoreductase 3</fullName>
    </alternativeName>
    <alternativeName>
        <fullName evidence="1">FMN-dependent NADH-azoreductase 3</fullName>
        <ecNumber evidence="1">1.7.1.17</ecNumber>
    </alternativeName>
</protein>
<name>AZOR3_PSEF5</name>
<dbReference type="EC" id="1.6.5.-" evidence="1"/>
<dbReference type="EC" id="1.7.1.17" evidence="1"/>
<dbReference type="EMBL" id="CP000076">
    <property type="protein sequence ID" value="AAY91318.1"/>
    <property type="molecule type" value="Genomic_DNA"/>
</dbReference>
<dbReference type="RefSeq" id="WP_011060352.1">
    <property type="nucleotide sequence ID" value="NC_004129.6"/>
</dbReference>
<dbReference type="SMR" id="Q4KF31"/>
<dbReference type="STRING" id="220664.PFL_2033"/>
<dbReference type="KEGG" id="pfl:PFL_2033"/>
<dbReference type="PATRIC" id="fig|220664.5.peg.2070"/>
<dbReference type="eggNOG" id="COG1182">
    <property type="taxonomic scope" value="Bacteria"/>
</dbReference>
<dbReference type="HOGENOM" id="CLU_088964_1_0_6"/>
<dbReference type="Proteomes" id="UP000008540">
    <property type="component" value="Chromosome"/>
</dbReference>
<dbReference type="GO" id="GO:0009055">
    <property type="term" value="F:electron transfer activity"/>
    <property type="evidence" value="ECO:0007669"/>
    <property type="project" value="UniProtKB-UniRule"/>
</dbReference>
<dbReference type="GO" id="GO:0010181">
    <property type="term" value="F:FMN binding"/>
    <property type="evidence" value="ECO:0007669"/>
    <property type="project" value="UniProtKB-UniRule"/>
</dbReference>
<dbReference type="GO" id="GO:0016652">
    <property type="term" value="F:oxidoreductase activity, acting on NAD(P)H as acceptor"/>
    <property type="evidence" value="ECO:0007669"/>
    <property type="project" value="UniProtKB-UniRule"/>
</dbReference>
<dbReference type="GO" id="GO:0016655">
    <property type="term" value="F:oxidoreductase activity, acting on NAD(P)H, quinone or similar compound as acceptor"/>
    <property type="evidence" value="ECO:0007669"/>
    <property type="project" value="InterPro"/>
</dbReference>
<dbReference type="Gene3D" id="3.40.50.360">
    <property type="match status" value="1"/>
</dbReference>
<dbReference type="HAMAP" id="MF_01216">
    <property type="entry name" value="Azoreductase_type1"/>
    <property type="match status" value="1"/>
</dbReference>
<dbReference type="InterPro" id="IPR003680">
    <property type="entry name" value="Flavodoxin_fold"/>
</dbReference>
<dbReference type="InterPro" id="IPR029039">
    <property type="entry name" value="Flavoprotein-like_sf"/>
</dbReference>
<dbReference type="InterPro" id="IPR050104">
    <property type="entry name" value="FMN-dep_NADH:Q_OxRdtase_AzoR1"/>
</dbReference>
<dbReference type="InterPro" id="IPR023048">
    <property type="entry name" value="NADH:quinone_OxRdtase_FMN_depd"/>
</dbReference>
<dbReference type="PANTHER" id="PTHR43741">
    <property type="entry name" value="FMN-DEPENDENT NADH-AZOREDUCTASE 1"/>
    <property type="match status" value="1"/>
</dbReference>
<dbReference type="PANTHER" id="PTHR43741:SF4">
    <property type="entry name" value="FMN-DEPENDENT NADH:QUINONE OXIDOREDUCTASE"/>
    <property type="match status" value="1"/>
</dbReference>
<dbReference type="Pfam" id="PF02525">
    <property type="entry name" value="Flavodoxin_2"/>
    <property type="match status" value="1"/>
</dbReference>
<dbReference type="SUPFAM" id="SSF52218">
    <property type="entry name" value="Flavoproteins"/>
    <property type="match status" value="1"/>
</dbReference>
<keyword id="KW-0285">Flavoprotein</keyword>
<keyword id="KW-0288">FMN</keyword>
<keyword id="KW-0520">NAD</keyword>
<keyword id="KW-0560">Oxidoreductase</keyword>
<comment type="function">
    <text evidence="1">Quinone reductase that provides resistance to thiol-specific stress caused by electrophilic quinones.</text>
</comment>
<comment type="function">
    <text evidence="1">Also exhibits azoreductase activity. Catalyzes the reductive cleavage of the azo bond in aromatic azo compounds to the corresponding amines.</text>
</comment>
<comment type="catalytic activity">
    <reaction evidence="1">
        <text>2 a quinone + NADH + H(+) = 2 a 1,4-benzosemiquinone + NAD(+)</text>
        <dbReference type="Rhea" id="RHEA:65952"/>
        <dbReference type="ChEBI" id="CHEBI:15378"/>
        <dbReference type="ChEBI" id="CHEBI:57540"/>
        <dbReference type="ChEBI" id="CHEBI:57945"/>
        <dbReference type="ChEBI" id="CHEBI:132124"/>
        <dbReference type="ChEBI" id="CHEBI:134225"/>
    </reaction>
</comment>
<comment type="catalytic activity">
    <reaction evidence="1">
        <text>N,N-dimethyl-1,4-phenylenediamine + anthranilate + 2 NAD(+) = 2-(4-dimethylaminophenyl)diazenylbenzoate + 2 NADH + 2 H(+)</text>
        <dbReference type="Rhea" id="RHEA:55872"/>
        <dbReference type="ChEBI" id="CHEBI:15378"/>
        <dbReference type="ChEBI" id="CHEBI:15783"/>
        <dbReference type="ChEBI" id="CHEBI:16567"/>
        <dbReference type="ChEBI" id="CHEBI:57540"/>
        <dbReference type="ChEBI" id="CHEBI:57945"/>
        <dbReference type="ChEBI" id="CHEBI:71579"/>
        <dbReference type="EC" id="1.7.1.17"/>
    </reaction>
</comment>
<comment type="cofactor">
    <cofactor evidence="1">
        <name>FMN</name>
        <dbReference type="ChEBI" id="CHEBI:58210"/>
    </cofactor>
    <text evidence="1">Binds 1 FMN per subunit.</text>
</comment>
<comment type="subunit">
    <text evidence="1">Homodimer.</text>
</comment>
<comment type="similarity">
    <text evidence="1">Belongs to the azoreductase type 1 family.</text>
</comment>
<reference key="1">
    <citation type="journal article" date="2005" name="Nat. Biotechnol.">
        <title>Complete genome sequence of the plant commensal Pseudomonas fluorescens Pf-5.</title>
        <authorList>
            <person name="Paulsen I.T."/>
            <person name="Press C.M."/>
            <person name="Ravel J."/>
            <person name="Kobayashi D.Y."/>
            <person name="Myers G.S.A."/>
            <person name="Mavrodi D.V."/>
            <person name="DeBoy R.T."/>
            <person name="Seshadri R."/>
            <person name="Ren Q."/>
            <person name="Madupu R."/>
            <person name="Dodson R.J."/>
            <person name="Durkin A.S."/>
            <person name="Brinkac L.M."/>
            <person name="Daugherty S.C."/>
            <person name="Sullivan S.A."/>
            <person name="Rosovitz M.J."/>
            <person name="Gwinn M.L."/>
            <person name="Zhou L."/>
            <person name="Schneider D.J."/>
            <person name="Cartinhour S.W."/>
            <person name="Nelson W.C."/>
            <person name="Weidman J."/>
            <person name="Watkins K."/>
            <person name="Tran K."/>
            <person name="Khouri H."/>
            <person name="Pierson E.A."/>
            <person name="Pierson L.S. III"/>
            <person name="Thomashow L.S."/>
            <person name="Loper J.E."/>
        </authorList>
    </citation>
    <scope>NUCLEOTIDE SEQUENCE [LARGE SCALE GENOMIC DNA]</scope>
    <source>
        <strain>ATCC BAA-477 / NRRL B-23932 / Pf-5</strain>
    </source>
</reference>